<organism>
    <name type="scientific">Bacillus subtilis (strain 168)</name>
    <dbReference type="NCBI Taxonomy" id="224308"/>
    <lineage>
        <taxon>Bacteria</taxon>
        <taxon>Bacillati</taxon>
        <taxon>Bacillota</taxon>
        <taxon>Bacilli</taxon>
        <taxon>Bacillales</taxon>
        <taxon>Bacillaceae</taxon>
        <taxon>Bacillus</taxon>
    </lineage>
</organism>
<protein>
    <recommendedName>
        <fullName>Uncharacterized protein YqiK</fullName>
    </recommendedName>
</protein>
<feature type="chain" id="PRO_0000049826" description="Uncharacterized protein YqiK">
    <location>
        <begin position="1"/>
        <end position="243"/>
    </location>
</feature>
<feature type="domain" description="GP-PDE">
    <location>
        <begin position="2"/>
        <end position="240"/>
    </location>
</feature>
<feature type="sequence conflict" description="In Ref. 1; BAA12586." evidence="1" ref="1">
    <original>A</original>
    <variation>P</variation>
    <location>
        <position position="6"/>
    </location>
</feature>
<feature type="sequence conflict" description="In Ref. 1; BAA12586." evidence="1" ref="1">
    <original>G</original>
    <variation>R</variation>
    <location>
        <position position="227"/>
    </location>
</feature>
<accession>P54527</accession>
<comment type="sequence caution" evidence="1">
    <conflict type="frameshift">
        <sequence resource="EMBL-CDS" id="BAA12586"/>
    </conflict>
</comment>
<sequence length="243" mass="27119">MTKIFAHRGASGQFPENTMLAFEKGIEAGADGIELDVQLTKDGRIVVIHDERLNRTTSLKGFVKDTAYDEVKTANAAAGHDQAYSDIKVPLLEDVLSWAVKKDFLINIELKNSVIRYEGMEEKVLEAVKRFNVEDRVILSTFNHDSLALCARLAPHIERAVLTSDVLYQADRYIASIPASGYHPKINSPGVTDEVLKKMRNGLIKVRPYTVNRPEDMKRLIEAGADGMFTDFPEKASALLKNE</sequence>
<gene>
    <name type="primary">yqiK</name>
    <name type="ordered locus">BSU24180</name>
</gene>
<dbReference type="EMBL" id="D84432">
    <property type="protein sequence ID" value="BAA12586.1"/>
    <property type="status" value="ALT_FRAME"/>
    <property type="molecule type" value="Genomic_DNA"/>
</dbReference>
<dbReference type="EMBL" id="AL009126">
    <property type="protein sequence ID" value="CAB14349.2"/>
    <property type="molecule type" value="Genomic_DNA"/>
</dbReference>
<dbReference type="EMBL" id="U29084">
    <property type="status" value="NOT_ANNOTATED_CDS"/>
    <property type="molecule type" value="Genomic_DNA"/>
</dbReference>
<dbReference type="PIR" id="F69961">
    <property type="entry name" value="F69961"/>
</dbReference>
<dbReference type="RefSeq" id="WP_003230288.1">
    <property type="nucleotide sequence ID" value="NZ_OZ025638.1"/>
</dbReference>
<dbReference type="SMR" id="P54527"/>
<dbReference type="FunCoup" id="P54527">
    <property type="interactions" value="301"/>
</dbReference>
<dbReference type="STRING" id="224308.BSU24180"/>
<dbReference type="PaxDb" id="224308-BSU24180"/>
<dbReference type="EnsemblBacteria" id="CAB14349">
    <property type="protein sequence ID" value="CAB14349"/>
    <property type="gene ID" value="BSU_24180"/>
</dbReference>
<dbReference type="GeneID" id="938661"/>
<dbReference type="KEGG" id="bsu:BSU24180"/>
<dbReference type="PATRIC" id="fig|224308.179.peg.2632"/>
<dbReference type="eggNOG" id="COG0584">
    <property type="taxonomic scope" value="Bacteria"/>
</dbReference>
<dbReference type="InParanoid" id="P54527"/>
<dbReference type="OrthoDB" id="384721at2"/>
<dbReference type="PhylomeDB" id="P54527"/>
<dbReference type="BioCyc" id="BSUB:BSU24180-MONOMER"/>
<dbReference type="BRENDA" id="3.1.4.46">
    <property type="organism ID" value="658"/>
</dbReference>
<dbReference type="Proteomes" id="UP000001570">
    <property type="component" value="Chromosome"/>
</dbReference>
<dbReference type="GO" id="GO:0008081">
    <property type="term" value="F:phosphoric diester hydrolase activity"/>
    <property type="evidence" value="ECO:0007669"/>
    <property type="project" value="InterPro"/>
</dbReference>
<dbReference type="GO" id="GO:0006629">
    <property type="term" value="P:lipid metabolic process"/>
    <property type="evidence" value="ECO:0007669"/>
    <property type="project" value="InterPro"/>
</dbReference>
<dbReference type="CDD" id="cd08563">
    <property type="entry name" value="GDPD_TtGDE_like"/>
    <property type="match status" value="1"/>
</dbReference>
<dbReference type="Gene3D" id="3.20.20.190">
    <property type="entry name" value="Phosphatidylinositol (PI) phosphodiesterase"/>
    <property type="match status" value="1"/>
</dbReference>
<dbReference type="InterPro" id="IPR030395">
    <property type="entry name" value="GP_PDE_dom"/>
</dbReference>
<dbReference type="InterPro" id="IPR017946">
    <property type="entry name" value="PLC-like_Pdiesterase_TIM-brl"/>
</dbReference>
<dbReference type="PANTHER" id="PTHR46211:SF1">
    <property type="entry name" value="GLYCEROPHOSPHODIESTER PHOSPHODIESTERASE, CYTOPLASMIC"/>
    <property type="match status" value="1"/>
</dbReference>
<dbReference type="PANTHER" id="PTHR46211">
    <property type="entry name" value="GLYCEROPHOSPHORYL DIESTER PHOSPHODIESTERASE"/>
    <property type="match status" value="1"/>
</dbReference>
<dbReference type="Pfam" id="PF03009">
    <property type="entry name" value="GDPD"/>
    <property type="match status" value="1"/>
</dbReference>
<dbReference type="SUPFAM" id="SSF51695">
    <property type="entry name" value="PLC-like phosphodiesterases"/>
    <property type="match status" value="1"/>
</dbReference>
<dbReference type="PROSITE" id="PS51704">
    <property type="entry name" value="GP_PDE"/>
    <property type="match status" value="1"/>
</dbReference>
<name>YQIK_BACSU</name>
<reference key="1">
    <citation type="journal article" date="1996" name="Microbiology">
        <title>Systematic sequencing of the 283 kb 210 degrees-232 degrees region of the Bacillus subtilis genome containing the skin element and many sporulation genes.</title>
        <authorList>
            <person name="Mizuno M."/>
            <person name="Masuda S."/>
            <person name="Takemaru K."/>
            <person name="Hosono S."/>
            <person name="Sato T."/>
            <person name="Takeuchi M."/>
            <person name="Kobayashi Y."/>
        </authorList>
    </citation>
    <scope>NUCLEOTIDE SEQUENCE [GENOMIC DNA]</scope>
    <source>
        <strain>168 / JH642</strain>
    </source>
</reference>
<reference key="2">
    <citation type="journal article" date="1997" name="Nature">
        <title>The complete genome sequence of the Gram-positive bacterium Bacillus subtilis.</title>
        <authorList>
            <person name="Kunst F."/>
            <person name="Ogasawara N."/>
            <person name="Moszer I."/>
            <person name="Albertini A.M."/>
            <person name="Alloni G."/>
            <person name="Azevedo V."/>
            <person name="Bertero M.G."/>
            <person name="Bessieres P."/>
            <person name="Bolotin A."/>
            <person name="Borchert S."/>
            <person name="Borriss R."/>
            <person name="Boursier L."/>
            <person name="Brans A."/>
            <person name="Braun M."/>
            <person name="Brignell S.C."/>
            <person name="Bron S."/>
            <person name="Brouillet S."/>
            <person name="Bruschi C.V."/>
            <person name="Caldwell B."/>
            <person name="Capuano V."/>
            <person name="Carter N.M."/>
            <person name="Choi S.-K."/>
            <person name="Codani J.-J."/>
            <person name="Connerton I.F."/>
            <person name="Cummings N.J."/>
            <person name="Daniel R.A."/>
            <person name="Denizot F."/>
            <person name="Devine K.M."/>
            <person name="Duesterhoeft A."/>
            <person name="Ehrlich S.D."/>
            <person name="Emmerson P.T."/>
            <person name="Entian K.-D."/>
            <person name="Errington J."/>
            <person name="Fabret C."/>
            <person name="Ferrari E."/>
            <person name="Foulger D."/>
            <person name="Fritz C."/>
            <person name="Fujita M."/>
            <person name="Fujita Y."/>
            <person name="Fuma S."/>
            <person name="Galizzi A."/>
            <person name="Galleron N."/>
            <person name="Ghim S.-Y."/>
            <person name="Glaser P."/>
            <person name="Goffeau A."/>
            <person name="Golightly E.J."/>
            <person name="Grandi G."/>
            <person name="Guiseppi G."/>
            <person name="Guy B.J."/>
            <person name="Haga K."/>
            <person name="Haiech J."/>
            <person name="Harwood C.R."/>
            <person name="Henaut A."/>
            <person name="Hilbert H."/>
            <person name="Holsappel S."/>
            <person name="Hosono S."/>
            <person name="Hullo M.-F."/>
            <person name="Itaya M."/>
            <person name="Jones L.-M."/>
            <person name="Joris B."/>
            <person name="Karamata D."/>
            <person name="Kasahara Y."/>
            <person name="Klaerr-Blanchard M."/>
            <person name="Klein C."/>
            <person name="Kobayashi Y."/>
            <person name="Koetter P."/>
            <person name="Koningstein G."/>
            <person name="Krogh S."/>
            <person name="Kumano M."/>
            <person name="Kurita K."/>
            <person name="Lapidus A."/>
            <person name="Lardinois S."/>
            <person name="Lauber J."/>
            <person name="Lazarevic V."/>
            <person name="Lee S.-M."/>
            <person name="Levine A."/>
            <person name="Liu H."/>
            <person name="Masuda S."/>
            <person name="Mauel C."/>
            <person name="Medigue C."/>
            <person name="Medina N."/>
            <person name="Mellado R.P."/>
            <person name="Mizuno M."/>
            <person name="Moestl D."/>
            <person name="Nakai S."/>
            <person name="Noback M."/>
            <person name="Noone D."/>
            <person name="O'Reilly M."/>
            <person name="Ogawa K."/>
            <person name="Ogiwara A."/>
            <person name="Oudega B."/>
            <person name="Park S.-H."/>
            <person name="Parro V."/>
            <person name="Pohl T.M."/>
            <person name="Portetelle D."/>
            <person name="Porwollik S."/>
            <person name="Prescott A.M."/>
            <person name="Presecan E."/>
            <person name="Pujic P."/>
            <person name="Purnelle B."/>
            <person name="Rapoport G."/>
            <person name="Rey M."/>
            <person name="Reynolds S."/>
            <person name="Rieger M."/>
            <person name="Rivolta C."/>
            <person name="Rocha E."/>
            <person name="Roche B."/>
            <person name="Rose M."/>
            <person name="Sadaie Y."/>
            <person name="Sato T."/>
            <person name="Scanlan E."/>
            <person name="Schleich S."/>
            <person name="Schroeter R."/>
            <person name="Scoffone F."/>
            <person name="Sekiguchi J."/>
            <person name="Sekowska A."/>
            <person name="Seror S.J."/>
            <person name="Serror P."/>
            <person name="Shin B.-S."/>
            <person name="Soldo B."/>
            <person name="Sorokin A."/>
            <person name="Tacconi E."/>
            <person name="Takagi T."/>
            <person name="Takahashi H."/>
            <person name="Takemaru K."/>
            <person name="Takeuchi M."/>
            <person name="Tamakoshi A."/>
            <person name="Tanaka T."/>
            <person name="Terpstra P."/>
            <person name="Tognoni A."/>
            <person name="Tosato V."/>
            <person name="Uchiyama S."/>
            <person name="Vandenbol M."/>
            <person name="Vannier F."/>
            <person name="Vassarotti A."/>
            <person name="Viari A."/>
            <person name="Wambutt R."/>
            <person name="Wedler E."/>
            <person name="Wedler H."/>
            <person name="Weitzenegger T."/>
            <person name="Winters P."/>
            <person name="Wipat A."/>
            <person name="Yamamoto H."/>
            <person name="Yamane K."/>
            <person name="Yasumoto K."/>
            <person name="Yata K."/>
            <person name="Yoshida K."/>
            <person name="Yoshikawa H.-F."/>
            <person name="Zumstein E."/>
            <person name="Yoshikawa H."/>
            <person name="Danchin A."/>
        </authorList>
    </citation>
    <scope>NUCLEOTIDE SEQUENCE [LARGE SCALE GENOMIC DNA]</scope>
    <source>
        <strain>168</strain>
    </source>
</reference>
<reference key="3">
    <citation type="journal article" date="2009" name="Microbiology">
        <title>From a consortium sequence to a unified sequence: the Bacillus subtilis 168 reference genome a decade later.</title>
        <authorList>
            <person name="Barbe V."/>
            <person name="Cruveiller S."/>
            <person name="Kunst F."/>
            <person name="Lenoble P."/>
            <person name="Meurice G."/>
            <person name="Sekowska A."/>
            <person name="Vallenet D."/>
            <person name="Wang T."/>
            <person name="Moszer I."/>
            <person name="Medigue C."/>
            <person name="Danchin A."/>
        </authorList>
    </citation>
    <scope>SEQUENCE REVISION TO 6; 227 AND C-TERMINUS</scope>
</reference>
<reference key="4">
    <citation type="journal article" date="1996" name="J. Bacteriol.">
        <title>A sigma E dependent operon subject to catabolite repression during sporulation in Bacillus subtilis.</title>
        <authorList>
            <person name="Bryan E.M."/>
            <person name="Beall B.W."/>
            <person name="Moran C.P. Jr."/>
        </authorList>
    </citation>
    <scope>NUCLEOTIDE SEQUENCE [GENOMIC DNA] OF 196-243</scope>
    <source>
        <strain>168 / MB24</strain>
    </source>
</reference>
<keyword id="KW-1185">Reference proteome</keyword>
<evidence type="ECO:0000305" key="1"/>
<proteinExistence type="predicted"/>